<comment type="function">
    <text evidence="1">Component of the cytochrome b6-f complex, which mediates electron transfer between photosystem II (PSII) and photosystem I (PSI), cyclic electron flow around PSI, and state transitions.</text>
</comment>
<comment type="subunit">
    <text evidence="1">The 4 large subunits of the cytochrome b6-f complex are cytochrome b6, subunit IV (17 kDa polypeptide, PetD), cytochrome f and the Rieske protein, while the 4 small subunits are PetG, PetL, PetM and PetN. The complex functions as a dimer.</text>
</comment>
<comment type="subcellular location">
    <subcellularLocation>
        <location>Plastid</location>
        <location>Chloroplast thylakoid membrane</location>
        <topology>Single-pass membrane protein</topology>
    </subcellularLocation>
</comment>
<comment type="similarity">
    <text evidence="1">Belongs to the PetN family.</text>
</comment>
<geneLocation type="chloroplast"/>
<keyword id="KW-0150">Chloroplast</keyword>
<keyword id="KW-0249">Electron transport</keyword>
<keyword id="KW-0472">Membrane</keyword>
<keyword id="KW-0602">Photosynthesis</keyword>
<keyword id="KW-0934">Plastid</keyword>
<keyword id="KW-0793">Thylakoid</keyword>
<keyword id="KW-0812">Transmembrane</keyword>
<keyword id="KW-1133">Transmembrane helix</keyword>
<keyword id="KW-0813">Transport</keyword>
<feature type="chain" id="PRO_0000275568" description="Cytochrome b6-f complex subunit 8">
    <location>
        <begin position="1"/>
        <end position="29"/>
    </location>
</feature>
<feature type="transmembrane region" description="Helical" evidence="1">
    <location>
        <begin position="3"/>
        <end position="23"/>
    </location>
</feature>
<organism>
    <name type="scientific">Staurastrum punctulatum</name>
    <name type="common">Green alga</name>
    <name type="synonym">Cosmoastrum punctulatum</name>
    <dbReference type="NCBI Taxonomy" id="102822"/>
    <lineage>
        <taxon>Eukaryota</taxon>
        <taxon>Viridiplantae</taxon>
        <taxon>Streptophyta</taxon>
        <taxon>Zygnematophyceae</taxon>
        <taxon>Zygnematophycidae</taxon>
        <taxon>Desmidiales</taxon>
        <taxon>Desmidiaceae</taxon>
        <taxon>Staurastrum</taxon>
    </lineage>
</organism>
<proteinExistence type="inferred from homology"/>
<dbReference type="EMBL" id="AY958085">
    <property type="protein sequence ID" value="AAX45714.1"/>
    <property type="molecule type" value="Genomic_DNA"/>
</dbReference>
<dbReference type="RefSeq" id="YP_636412.1">
    <property type="nucleotide sequence ID" value="NC_008116.1"/>
</dbReference>
<dbReference type="SMR" id="Q32RW4"/>
<dbReference type="GeneID" id="4108674"/>
<dbReference type="GO" id="GO:0009535">
    <property type="term" value="C:chloroplast thylakoid membrane"/>
    <property type="evidence" value="ECO:0007669"/>
    <property type="project" value="UniProtKB-SubCell"/>
</dbReference>
<dbReference type="GO" id="GO:0009512">
    <property type="term" value="C:cytochrome b6f complex"/>
    <property type="evidence" value="ECO:0007669"/>
    <property type="project" value="InterPro"/>
</dbReference>
<dbReference type="GO" id="GO:0045158">
    <property type="term" value="F:electron transporter, transferring electrons within cytochrome b6/f complex of photosystem II activity"/>
    <property type="evidence" value="ECO:0007669"/>
    <property type="project" value="InterPro"/>
</dbReference>
<dbReference type="GO" id="GO:0017004">
    <property type="term" value="P:cytochrome complex assembly"/>
    <property type="evidence" value="ECO:0007669"/>
    <property type="project" value="UniProtKB-UniRule"/>
</dbReference>
<dbReference type="GO" id="GO:0015979">
    <property type="term" value="P:photosynthesis"/>
    <property type="evidence" value="ECO:0007669"/>
    <property type="project" value="UniProtKB-KW"/>
</dbReference>
<dbReference type="HAMAP" id="MF_00395">
    <property type="entry name" value="Cytb6_f_PetN"/>
    <property type="match status" value="1"/>
</dbReference>
<dbReference type="InterPro" id="IPR036143">
    <property type="entry name" value="Cytochr_b6-f_cplx_su8_sf"/>
</dbReference>
<dbReference type="InterPro" id="IPR005497">
    <property type="entry name" value="Cytochrome_b6-f_cplx_su8"/>
</dbReference>
<dbReference type="Pfam" id="PF03742">
    <property type="entry name" value="PetN"/>
    <property type="match status" value="1"/>
</dbReference>
<dbReference type="SUPFAM" id="SSF103451">
    <property type="entry name" value="PetN subunit of the cytochrome b6f complex"/>
    <property type="match status" value="1"/>
</dbReference>
<sequence>MDIISIGWVSLMVVFTFSISLVVWGRSGL</sequence>
<evidence type="ECO:0000255" key="1">
    <source>
        <dbReference type="HAMAP-Rule" id="MF_00395"/>
    </source>
</evidence>
<name>PETN_STAPU</name>
<protein>
    <recommendedName>
        <fullName evidence="1">Cytochrome b6-f complex subunit 8</fullName>
    </recommendedName>
    <alternativeName>
        <fullName evidence="1">Cytochrome b6-f complex subunit PetN</fullName>
    </alternativeName>
    <alternativeName>
        <fullName evidence="1">Cytochrome b6-f complex subunit VIII</fullName>
    </alternativeName>
</protein>
<accession>Q32RW4</accession>
<reference key="1">
    <citation type="journal article" date="2005" name="BMC Biol.">
        <title>The complete chloroplast DNA sequences of the charophycean green algae Staurastrum and Zygnema reveal that the chloroplast genome underwent extensive changes during the evolution of the Zygnematales.</title>
        <authorList>
            <person name="Turmel M."/>
            <person name="Otis C."/>
            <person name="Lemieux C."/>
        </authorList>
    </citation>
    <scope>NUCLEOTIDE SEQUENCE [LARGE SCALE GENOMIC DNA]</scope>
</reference>
<gene>
    <name evidence="1" type="primary">petN</name>
</gene>